<feature type="signal peptide" evidence="2">
    <location>
        <begin position="1"/>
        <end position="21"/>
    </location>
</feature>
<feature type="chain" id="PRO_0000021978" description="Otospiralin">
    <location>
        <begin position="22"/>
        <end position="89"/>
    </location>
</feature>
<sequence length="89" mass="10095">MQPCVLWWLALGLLLGIPAGAKPTPEEADPNAQPPAMPYWPFSTSDFWNYVQYFQSQGAYPQIEDMARTFFAHFPLGSTLGFHVPYQED</sequence>
<accession>Q8K560</accession>
<protein>
    <recommendedName>
        <fullName>Otospiralin</fullName>
    </recommendedName>
</protein>
<name>OTOSP_RAT</name>
<comment type="function">
    <text evidence="1">May be essential for the survival of the neurosensory epithelium of the inner ear.</text>
</comment>
<comment type="subcellular location">
    <subcellularLocation>
        <location evidence="4">Secreted</location>
    </subcellularLocation>
</comment>
<comment type="tissue specificity">
    <text evidence="3">Ear specific. Expressed in the cochlea and vestibule, but not in the cochlear nerve, cochlear nucleus, spinal chord, muscle, cerebral cortex, cerebellum, diencephalon and olfactory bulb. In the cochlea, expressed in fibrocytes of the spiral limbus, spiral ligament and suprastrial zone. In the vestibule, expressed in cells located to the stroma below the macular and crista sensory epithelia and in the subepithelial layer of the walls of semicircular canals and maculae.</text>
</comment>
<comment type="similarity">
    <text evidence="4">Belongs to the otospiralin family.</text>
</comment>
<proteinExistence type="evidence at transcript level"/>
<reference key="1">
    <citation type="journal article" date="2002" name="J. Neurosci.">
        <title>Down regulation of otospiralin, a novel inner ear protein, causes hair cell degeneration and deafness.</title>
        <authorList>
            <person name="Delprat B."/>
            <person name="Boulanger A.M."/>
            <person name="Wang J."/>
            <person name="Beaudoin V."/>
            <person name="Guitton M.J."/>
            <person name="Venteo S."/>
            <person name="Dechesne C.J."/>
            <person name="Pujol R."/>
            <person name="Lavigne-Rebillard M."/>
            <person name="Puel J.-L."/>
            <person name="Hamel C.P."/>
        </authorList>
    </citation>
    <scope>NUCLEOTIDE SEQUENCE [MRNA]</scope>
    <scope>TISSUE SPECIFICITY</scope>
    <source>
        <strain>Wistar</strain>
    </source>
</reference>
<dbReference type="EMBL" id="AY062254">
    <property type="protein sequence ID" value="AAL47487.1"/>
    <property type="molecule type" value="mRNA"/>
</dbReference>
<dbReference type="RefSeq" id="NP_631927.1">
    <property type="nucleotide sequence ID" value="NM_139188.4"/>
</dbReference>
<dbReference type="RefSeq" id="XP_008765580.1">
    <property type="nucleotide sequence ID" value="XM_008767358.2"/>
</dbReference>
<dbReference type="RefSeq" id="XP_017451757.1">
    <property type="nucleotide sequence ID" value="XM_017596268.3"/>
</dbReference>
<dbReference type="RefSeq" id="XP_017451758.1">
    <property type="nucleotide sequence ID" value="XM_017596269.1"/>
</dbReference>
<dbReference type="FunCoup" id="Q8K560">
    <property type="interactions" value="1"/>
</dbReference>
<dbReference type="STRING" id="10116.ENSRNOP00000075662"/>
<dbReference type="GlyGen" id="Q8K560">
    <property type="glycosylation" value="1 site"/>
</dbReference>
<dbReference type="PaxDb" id="10116-ENSRNOP00000022220"/>
<dbReference type="Ensembl" id="ENSRNOT00000022220.3">
    <property type="protein sequence ID" value="ENSRNOP00000022220.1"/>
    <property type="gene ID" value="ENSRNOG00000016567.4"/>
</dbReference>
<dbReference type="GeneID" id="246044"/>
<dbReference type="KEGG" id="rno:246044"/>
<dbReference type="AGR" id="RGD:708465"/>
<dbReference type="CTD" id="150677"/>
<dbReference type="RGD" id="708465">
    <property type="gene designation" value="Otos"/>
</dbReference>
<dbReference type="eggNOG" id="ENOG502S3R4">
    <property type="taxonomic scope" value="Eukaryota"/>
</dbReference>
<dbReference type="GeneTree" id="ENSGT00390000011600"/>
<dbReference type="InParanoid" id="Q8K560"/>
<dbReference type="OMA" id="GAYEQIN"/>
<dbReference type="OrthoDB" id="8858469at2759"/>
<dbReference type="PhylomeDB" id="Q8K560"/>
<dbReference type="TreeFam" id="TF336889"/>
<dbReference type="PRO" id="PR:Q8K560"/>
<dbReference type="Proteomes" id="UP000002494">
    <property type="component" value="Chromosome 9"/>
</dbReference>
<dbReference type="Bgee" id="ENSRNOG00000016567">
    <property type="expression patterns" value="Expressed in spleen and 4 other cell types or tissues"/>
</dbReference>
<dbReference type="GO" id="GO:0005576">
    <property type="term" value="C:extracellular region"/>
    <property type="evidence" value="ECO:0007669"/>
    <property type="project" value="UniProtKB-SubCell"/>
</dbReference>
<dbReference type="GO" id="GO:0007605">
    <property type="term" value="P:sensory perception of sound"/>
    <property type="evidence" value="ECO:0000266"/>
    <property type="project" value="RGD"/>
</dbReference>
<dbReference type="InterPro" id="IPR028224">
    <property type="entry name" value="Otospiralin"/>
</dbReference>
<dbReference type="PANTHER" id="PTHR35073">
    <property type="entry name" value="OTOSPIRALIN"/>
    <property type="match status" value="1"/>
</dbReference>
<dbReference type="PANTHER" id="PTHR35073:SF1">
    <property type="entry name" value="OTOSPIRALIN"/>
    <property type="match status" value="1"/>
</dbReference>
<dbReference type="Pfam" id="PF15182">
    <property type="entry name" value="OTOS"/>
    <property type="match status" value="1"/>
</dbReference>
<organism>
    <name type="scientific">Rattus norvegicus</name>
    <name type="common">Rat</name>
    <dbReference type="NCBI Taxonomy" id="10116"/>
    <lineage>
        <taxon>Eukaryota</taxon>
        <taxon>Metazoa</taxon>
        <taxon>Chordata</taxon>
        <taxon>Craniata</taxon>
        <taxon>Vertebrata</taxon>
        <taxon>Euteleostomi</taxon>
        <taxon>Mammalia</taxon>
        <taxon>Eutheria</taxon>
        <taxon>Euarchontoglires</taxon>
        <taxon>Glires</taxon>
        <taxon>Rodentia</taxon>
        <taxon>Myomorpha</taxon>
        <taxon>Muroidea</taxon>
        <taxon>Muridae</taxon>
        <taxon>Murinae</taxon>
        <taxon>Rattus</taxon>
    </lineage>
</organism>
<keyword id="KW-1185">Reference proteome</keyword>
<keyword id="KW-0964">Secreted</keyword>
<keyword id="KW-0732">Signal</keyword>
<evidence type="ECO:0000250" key="1"/>
<evidence type="ECO:0000255" key="2"/>
<evidence type="ECO:0000269" key="3">
    <source>
    </source>
</evidence>
<evidence type="ECO:0000305" key="4"/>
<gene>
    <name type="primary">Otos</name>
</gene>